<evidence type="ECO:0000255" key="1">
    <source>
        <dbReference type="HAMAP-Rule" id="MF_00210"/>
    </source>
</evidence>
<reference key="1">
    <citation type="journal article" date="2005" name="J. Bacteriol.">
        <title>Insights into genome plasticity and pathogenicity of the plant pathogenic Bacterium Xanthomonas campestris pv. vesicatoria revealed by the complete genome sequence.</title>
        <authorList>
            <person name="Thieme F."/>
            <person name="Koebnik R."/>
            <person name="Bekel T."/>
            <person name="Berger C."/>
            <person name="Boch J."/>
            <person name="Buettner D."/>
            <person name="Caldana C."/>
            <person name="Gaigalat L."/>
            <person name="Goesmann A."/>
            <person name="Kay S."/>
            <person name="Kirchner O."/>
            <person name="Lanz C."/>
            <person name="Linke B."/>
            <person name="McHardy A.C."/>
            <person name="Meyer F."/>
            <person name="Mittenhuber G."/>
            <person name="Nies D.H."/>
            <person name="Niesbach-Kloesgen U."/>
            <person name="Patschkowski T."/>
            <person name="Rueckert C."/>
            <person name="Rupp O."/>
            <person name="Schneiker S."/>
            <person name="Schuster S.C."/>
            <person name="Vorhoelter F.J."/>
            <person name="Weber E."/>
            <person name="Puehler A."/>
            <person name="Bonas U."/>
            <person name="Bartels D."/>
            <person name="Kaiser O."/>
        </authorList>
    </citation>
    <scope>NUCLEOTIDE SEQUENCE [LARGE SCALE GENOMIC DNA]</scope>
    <source>
        <strain>85-10</strain>
    </source>
</reference>
<keyword id="KW-0028">Amino-acid biosynthesis</keyword>
<keyword id="KW-0057">Aromatic amino acid biosynthesis</keyword>
<keyword id="KW-0963">Cytoplasm</keyword>
<keyword id="KW-0808">Transferase</keyword>
<feature type="chain" id="PRO_1000012507" description="3-phosphoshikimate 1-carboxyvinyltransferase">
    <location>
        <begin position="1"/>
        <end position="440"/>
    </location>
</feature>
<feature type="active site" description="Proton acceptor" evidence="1">
    <location>
        <position position="320"/>
    </location>
</feature>
<feature type="binding site" evidence="1">
    <location>
        <position position="26"/>
    </location>
    <ligand>
        <name>3-phosphoshikimate</name>
        <dbReference type="ChEBI" id="CHEBI:145989"/>
    </ligand>
</feature>
<feature type="binding site" evidence="1">
    <location>
        <position position="26"/>
    </location>
    <ligand>
        <name>phosphoenolpyruvate</name>
        <dbReference type="ChEBI" id="CHEBI:58702"/>
    </ligand>
</feature>
<feature type="binding site" evidence="1">
    <location>
        <position position="27"/>
    </location>
    <ligand>
        <name>3-phosphoshikimate</name>
        <dbReference type="ChEBI" id="CHEBI:145989"/>
    </ligand>
</feature>
<feature type="binding site" evidence="1">
    <location>
        <position position="31"/>
    </location>
    <ligand>
        <name>3-phosphoshikimate</name>
        <dbReference type="ChEBI" id="CHEBI:145989"/>
    </ligand>
</feature>
<feature type="binding site" evidence="1">
    <location>
        <position position="99"/>
    </location>
    <ligand>
        <name>phosphoenolpyruvate</name>
        <dbReference type="ChEBI" id="CHEBI:58702"/>
    </ligand>
</feature>
<feature type="binding site" evidence="1">
    <location>
        <position position="127"/>
    </location>
    <ligand>
        <name>phosphoenolpyruvate</name>
        <dbReference type="ChEBI" id="CHEBI:58702"/>
    </ligand>
</feature>
<feature type="binding site" evidence="1">
    <location>
        <position position="172"/>
    </location>
    <ligand>
        <name>3-phosphoshikimate</name>
        <dbReference type="ChEBI" id="CHEBI:145989"/>
    </ligand>
</feature>
<feature type="binding site" evidence="1">
    <location>
        <position position="174"/>
    </location>
    <ligand>
        <name>3-phosphoshikimate</name>
        <dbReference type="ChEBI" id="CHEBI:145989"/>
    </ligand>
</feature>
<feature type="binding site" evidence="1">
    <location>
        <position position="174"/>
    </location>
    <ligand>
        <name>phosphoenolpyruvate</name>
        <dbReference type="ChEBI" id="CHEBI:58702"/>
    </ligand>
</feature>
<feature type="binding site" evidence="1">
    <location>
        <position position="320"/>
    </location>
    <ligand>
        <name>3-phosphoshikimate</name>
        <dbReference type="ChEBI" id="CHEBI:145989"/>
    </ligand>
</feature>
<feature type="binding site" evidence="1">
    <location>
        <position position="347"/>
    </location>
    <ligand>
        <name>3-phosphoshikimate</name>
        <dbReference type="ChEBI" id="CHEBI:145989"/>
    </ligand>
</feature>
<feature type="binding site" evidence="1">
    <location>
        <position position="351"/>
    </location>
    <ligand>
        <name>phosphoenolpyruvate</name>
        <dbReference type="ChEBI" id="CHEBI:58702"/>
    </ligand>
</feature>
<feature type="binding site" evidence="1">
    <location>
        <position position="392"/>
    </location>
    <ligand>
        <name>phosphoenolpyruvate</name>
        <dbReference type="ChEBI" id="CHEBI:58702"/>
    </ligand>
</feature>
<dbReference type="EC" id="2.5.1.19" evidence="1"/>
<dbReference type="EMBL" id="AM039952">
    <property type="protein sequence ID" value="CAJ23368.1"/>
    <property type="molecule type" value="Genomic_DNA"/>
</dbReference>
<dbReference type="RefSeq" id="WP_011347048.1">
    <property type="nucleotide sequence ID" value="NZ_CP017190.1"/>
</dbReference>
<dbReference type="SMR" id="Q3BUZ1"/>
<dbReference type="STRING" id="456327.BJD11_14125"/>
<dbReference type="KEGG" id="xcv:XCV1691"/>
<dbReference type="eggNOG" id="COG0128">
    <property type="taxonomic scope" value="Bacteria"/>
</dbReference>
<dbReference type="HOGENOM" id="CLU_024321_0_1_6"/>
<dbReference type="UniPathway" id="UPA00053">
    <property type="reaction ID" value="UER00089"/>
</dbReference>
<dbReference type="Proteomes" id="UP000007069">
    <property type="component" value="Chromosome"/>
</dbReference>
<dbReference type="GO" id="GO:0005737">
    <property type="term" value="C:cytoplasm"/>
    <property type="evidence" value="ECO:0007669"/>
    <property type="project" value="UniProtKB-SubCell"/>
</dbReference>
<dbReference type="GO" id="GO:0003866">
    <property type="term" value="F:3-phosphoshikimate 1-carboxyvinyltransferase activity"/>
    <property type="evidence" value="ECO:0007669"/>
    <property type="project" value="UniProtKB-UniRule"/>
</dbReference>
<dbReference type="GO" id="GO:0008652">
    <property type="term" value="P:amino acid biosynthetic process"/>
    <property type="evidence" value="ECO:0007669"/>
    <property type="project" value="UniProtKB-KW"/>
</dbReference>
<dbReference type="GO" id="GO:0009073">
    <property type="term" value="P:aromatic amino acid family biosynthetic process"/>
    <property type="evidence" value="ECO:0007669"/>
    <property type="project" value="UniProtKB-KW"/>
</dbReference>
<dbReference type="GO" id="GO:0009423">
    <property type="term" value="P:chorismate biosynthetic process"/>
    <property type="evidence" value="ECO:0007669"/>
    <property type="project" value="UniProtKB-UniRule"/>
</dbReference>
<dbReference type="CDD" id="cd01556">
    <property type="entry name" value="EPSP_synthase"/>
    <property type="match status" value="1"/>
</dbReference>
<dbReference type="FunFam" id="3.65.10.10:FF:000005">
    <property type="entry name" value="3-phosphoshikimate 1-carboxyvinyltransferase"/>
    <property type="match status" value="1"/>
</dbReference>
<dbReference type="FunFam" id="3.65.10.10:FF:000006">
    <property type="entry name" value="3-phosphoshikimate 1-carboxyvinyltransferase"/>
    <property type="match status" value="1"/>
</dbReference>
<dbReference type="Gene3D" id="3.65.10.10">
    <property type="entry name" value="Enolpyruvate transferase domain"/>
    <property type="match status" value="2"/>
</dbReference>
<dbReference type="HAMAP" id="MF_00210">
    <property type="entry name" value="EPSP_synth"/>
    <property type="match status" value="1"/>
</dbReference>
<dbReference type="InterPro" id="IPR001986">
    <property type="entry name" value="Enolpyruvate_Tfrase_dom"/>
</dbReference>
<dbReference type="InterPro" id="IPR036968">
    <property type="entry name" value="Enolpyruvate_Tfrase_sf"/>
</dbReference>
<dbReference type="InterPro" id="IPR006264">
    <property type="entry name" value="EPSP_synthase"/>
</dbReference>
<dbReference type="InterPro" id="IPR023193">
    <property type="entry name" value="EPSP_synthase_CS"/>
</dbReference>
<dbReference type="InterPro" id="IPR013792">
    <property type="entry name" value="RNA3'P_cycl/enolpyr_Trfase_a/b"/>
</dbReference>
<dbReference type="NCBIfam" id="TIGR01356">
    <property type="entry name" value="aroA"/>
    <property type="match status" value="1"/>
</dbReference>
<dbReference type="PANTHER" id="PTHR21090">
    <property type="entry name" value="AROM/DEHYDROQUINATE SYNTHASE"/>
    <property type="match status" value="1"/>
</dbReference>
<dbReference type="PANTHER" id="PTHR21090:SF5">
    <property type="entry name" value="PENTAFUNCTIONAL AROM POLYPEPTIDE"/>
    <property type="match status" value="1"/>
</dbReference>
<dbReference type="Pfam" id="PF00275">
    <property type="entry name" value="EPSP_synthase"/>
    <property type="match status" value="1"/>
</dbReference>
<dbReference type="PIRSF" id="PIRSF000505">
    <property type="entry name" value="EPSPS"/>
    <property type="match status" value="1"/>
</dbReference>
<dbReference type="SUPFAM" id="SSF55205">
    <property type="entry name" value="EPT/RTPC-like"/>
    <property type="match status" value="1"/>
</dbReference>
<dbReference type="PROSITE" id="PS00104">
    <property type="entry name" value="EPSP_SYNTHASE_1"/>
    <property type="match status" value="1"/>
</dbReference>
<dbReference type="PROSITE" id="PS00885">
    <property type="entry name" value="EPSP_SYNTHASE_2"/>
    <property type="match status" value="1"/>
</dbReference>
<sequence length="440" mass="45663">MSSSTHHWIARRGTALQGSLAIPGDKSVSHRAVMFAALADGVSQIDGFLEGEDTRSTAAIFAKLGVRIETPSASQRIVHGVGVDGLQPPTEALDCGNAGTGMRLLAGLLAAQRFDSVLVGDESLSKRPMRRVTGPLAQMGARIETQDDGTPPLHVHGGQALHGIDFVSPVASAQVKSAVLLAGLYAQGETSVTEPHPTRDYTERMLSAFGVEIDFSPGKARLRGGQRLRATDIAVPADFSSAAFFIVAASIVPGSEVVLRAVGLNPRRTGLLAALRLMGAEISEENHAEHGGEPVADLRVRYAPLRGAQIPEALVPDMIDEFPALFVAAAAASGQTVVTGAAELRVKESDRLAAMATGLRTLGVQVDETPDGATIHGGSIGSGVIESHGDHRIAMAFAIAGQLSTGQVQVNDVANVATSFPGFDTLAQGAGFGLETAGRR</sequence>
<name>AROA_XANE5</name>
<accession>Q3BUZ1</accession>
<proteinExistence type="inferred from homology"/>
<comment type="function">
    <text evidence="1">Catalyzes the transfer of the enolpyruvyl moiety of phosphoenolpyruvate (PEP) to the 5-hydroxyl of shikimate-3-phosphate (S3P) to produce enolpyruvyl shikimate-3-phosphate and inorganic phosphate.</text>
</comment>
<comment type="catalytic activity">
    <reaction evidence="1">
        <text>3-phosphoshikimate + phosphoenolpyruvate = 5-O-(1-carboxyvinyl)-3-phosphoshikimate + phosphate</text>
        <dbReference type="Rhea" id="RHEA:21256"/>
        <dbReference type="ChEBI" id="CHEBI:43474"/>
        <dbReference type="ChEBI" id="CHEBI:57701"/>
        <dbReference type="ChEBI" id="CHEBI:58702"/>
        <dbReference type="ChEBI" id="CHEBI:145989"/>
        <dbReference type="EC" id="2.5.1.19"/>
    </reaction>
    <physiologicalReaction direction="left-to-right" evidence="1">
        <dbReference type="Rhea" id="RHEA:21257"/>
    </physiologicalReaction>
</comment>
<comment type="pathway">
    <text evidence="1">Metabolic intermediate biosynthesis; chorismate biosynthesis; chorismate from D-erythrose 4-phosphate and phosphoenolpyruvate: step 6/7.</text>
</comment>
<comment type="subunit">
    <text evidence="1">Monomer.</text>
</comment>
<comment type="subcellular location">
    <subcellularLocation>
        <location evidence="1">Cytoplasm</location>
    </subcellularLocation>
</comment>
<comment type="similarity">
    <text evidence="1">Belongs to the EPSP synthase family.</text>
</comment>
<protein>
    <recommendedName>
        <fullName evidence="1">3-phosphoshikimate 1-carboxyvinyltransferase</fullName>
        <ecNumber evidence="1">2.5.1.19</ecNumber>
    </recommendedName>
    <alternativeName>
        <fullName evidence="1">5-enolpyruvylshikimate-3-phosphate synthase</fullName>
        <shortName evidence="1">EPSP synthase</shortName>
        <shortName evidence="1">EPSPS</shortName>
    </alternativeName>
</protein>
<organism>
    <name type="scientific">Xanthomonas euvesicatoria pv. vesicatoria (strain 85-10)</name>
    <name type="common">Xanthomonas campestris pv. vesicatoria</name>
    <dbReference type="NCBI Taxonomy" id="316273"/>
    <lineage>
        <taxon>Bacteria</taxon>
        <taxon>Pseudomonadati</taxon>
        <taxon>Pseudomonadota</taxon>
        <taxon>Gammaproteobacteria</taxon>
        <taxon>Lysobacterales</taxon>
        <taxon>Lysobacteraceae</taxon>
        <taxon>Xanthomonas</taxon>
    </lineage>
</organism>
<gene>
    <name evidence="1" type="primary">aroA</name>
    <name type="ordered locus">XCV1691</name>
</gene>